<feature type="chain" id="PRO_0000184086" description="Flagellar motor switch protein FliG">
    <location>
        <begin position="1"/>
        <end position="331"/>
    </location>
</feature>
<feature type="short sequence motif" description="Part of the EHPQR-motif">
    <location>
        <begin position="125"/>
        <end position="128"/>
    </location>
</feature>
<feature type="site" description="Part of the EHPQR-motif">
    <location>
        <position position="160"/>
    </location>
</feature>
<reference key="1">
    <citation type="journal article" date="2002" name="Science">
        <title>50 million years of genomic stasis in endosymbiotic bacteria.</title>
        <authorList>
            <person name="Tamas I."/>
            <person name="Klasson L."/>
            <person name="Canbaeck B."/>
            <person name="Naeslund A.K."/>
            <person name="Eriksson A.-S."/>
            <person name="Wernegreen J.J."/>
            <person name="Sandstroem J.P."/>
            <person name="Moran N.A."/>
            <person name="Andersson S.G.E."/>
        </authorList>
    </citation>
    <scope>NUCLEOTIDE SEQUENCE [LARGE SCALE GENOMIC DNA]</scope>
    <source>
        <strain>Sg</strain>
    </source>
</reference>
<accession>Q8KA44</accession>
<evidence type="ECO:0000250" key="1"/>
<evidence type="ECO:0000305" key="2"/>
<organism>
    <name type="scientific">Buchnera aphidicola subsp. Schizaphis graminum (strain Sg)</name>
    <dbReference type="NCBI Taxonomy" id="198804"/>
    <lineage>
        <taxon>Bacteria</taxon>
        <taxon>Pseudomonadati</taxon>
        <taxon>Pseudomonadota</taxon>
        <taxon>Gammaproteobacteria</taxon>
        <taxon>Enterobacterales</taxon>
        <taxon>Erwiniaceae</taxon>
        <taxon>Buchnera</taxon>
    </lineage>
</organism>
<proteinExistence type="inferred from homology"/>
<protein>
    <recommendedName>
        <fullName>Flagellar motor switch protein FliG</fullName>
    </recommendedName>
</protein>
<gene>
    <name type="primary">fliG</name>
    <name type="ordered locus">BUsg_068</name>
</gene>
<keyword id="KW-0975">Bacterial flagellum</keyword>
<keyword id="KW-0997">Cell inner membrane</keyword>
<keyword id="KW-1003">Cell membrane</keyword>
<keyword id="KW-0145">Chemotaxis</keyword>
<keyword id="KW-0283">Flagellar rotation</keyword>
<keyword id="KW-0472">Membrane</keyword>
<comment type="function">
    <text evidence="1">FliG is one of three proteins (FliG, FliN, FliM) that forms the rotor-mounted switch complex (C ring), located at the base of the basal body. This complex interacts with the CheY and CheZ chemotaxis proteins, in addition to contacting components of the motor that determine the direction of flagellar rotation (By similarity).</text>
</comment>
<comment type="subcellular location">
    <subcellularLocation>
        <location evidence="1">Cell inner membrane</location>
        <topology evidence="1">Peripheral membrane protein</topology>
        <orientation evidence="1">Cytoplasmic side</orientation>
    </subcellularLocation>
    <subcellularLocation>
        <location evidence="1">Bacterial flagellum basal body</location>
    </subcellularLocation>
</comment>
<comment type="similarity">
    <text evidence="2">Belongs to the FliG family.</text>
</comment>
<sequence>MTLNGTEKSAILLMSIGADQASEVLKHLTPFEVQELVASMVNINQFSNTILNTVLSECYDLFSKKNNLICNNDENYISDVLTKTLGEKQGRILLNEVLETRNVKMCIETFNHMDPEKFISLLDQEHPQILTTILMYLDKRQSSKVLSRLSEKKCTEIVLRMAEFNCIKESNLIDLKKIIENLLKRKKLIFSEKNGIKTVAEILNSMKIEDEQNILKKINVLNKNLTRKIIKEMFLFDNIVNIEDKYIQCLISNLEKEKLCIALQGTSEVIRNKFFKNMNEEEANKLSIYLEEKSYISDIAIKNEQKLILIMLKNILDNGIFSLKKLGKYYV</sequence>
<dbReference type="EMBL" id="AE013218">
    <property type="protein sequence ID" value="AAM67638.1"/>
    <property type="molecule type" value="Genomic_DNA"/>
</dbReference>
<dbReference type="RefSeq" id="WP_011053604.1">
    <property type="nucleotide sequence ID" value="NC_004061.1"/>
</dbReference>
<dbReference type="SMR" id="Q8KA44"/>
<dbReference type="STRING" id="198804.BUsg_068"/>
<dbReference type="GeneID" id="93003538"/>
<dbReference type="KEGG" id="bas:BUsg_068"/>
<dbReference type="eggNOG" id="COG1536">
    <property type="taxonomic scope" value="Bacteria"/>
</dbReference>
<dbReference type="HOGENOM" id="CLU_047835_2_0_6"/>
<dbReference type="Proteomes" id="UP000000416">
    <property type="component" value="Chromosome"/>
</dbReference>
<dbReference type="GO" id="GO:0009425">
    <property type="term" value="C:bacterial-type flagellum basal body"/>
    <property type="evidence" value="ECO:0007669"/>
    <property type="project" value="UniProtKB-SubCell"/>
</dbReference>
<dbReference type="GO" id="GO:0005886">
    <property type="term" value="C:plasma membrane"/>
    <property type="evidence" value="ECO:0007669"/>
    <property type="project" value="UniProtKB-SubCell"/>
</dbReference>
<dbReference type="GO" id="GO:0003774">
    <property type="term" value="F:cytoskeletal motor activity"/>
    <property type="evidence" value="ECO:0007669"/>
    <property type="project" value="InterPro"/>
</dbReference>
<dbReference type="GO" id="GO:0071973">
    <property type="term" value="P:bacterial-type flagellum-dependent cell motility"/>
    <property type="evidence" value="ECO:0007669"/>
    <property type="project" value="InterPro"/>
</dbReference>
<dbReference type="GO" id="GO:0006935">
    <property type="term" value="P:chemotaxis"/>
    <property type="evidence" value="ECO:0007669"/>
    <property type="project" value="UniProtKB-KW"/>
</dbReference>
<dbReference type="Gene3D" id="1.10.220.30">
    <property type="match status" value="3"/>
</dbReference>
<dbReference type="InterPro" id="IPR000090">
    <property type="entry name" value="Flg_Motor_Flig"/>
</dbReference>
<dbReference type="InterPro" id="IPR023087">
    <property type="entry name" value="Flg_Motor_Flig_C"/>
</dbReference>
<dbReference type="InterPro" id="IPR011002">
    <property type="entry name" value="FliG_a-hlx"/>
</dbReference>
<dbReference type="InterPro" id="IPR032779">
    <property type="entry name" value="FliG_M"/>
</dbReference>
<dbReference type="InterPro" id="IPR028263">
    <property type="entry name" value="FliG_N"/>
</dbReference>
<dbReference type="NCBIfam" id="TIGR00207">
    <property type="entry name" value="fliG"/>
    <property type="match status" value="1"/>
</dbReference>
<dbReference type="PANTHER" id="PTHR30534">
    <property type="entry name" value="FLAGELLAR MOTOR SWITCH PROTEIN FLIG"/>
    <property type="match status" value="1"/>
</dbReference>
<dbReference type="PANTHER" id="PTHR30534:SF0">
    <property type="entry name" value="FLAGELLAR MOTOR SWITCH PROTEIN FLIG"/>
    <property type="match status" value="1"/>
</dbReference>
<dbReference type="Pfam" id="PF01706">
    <property type="entry name" value="FliG_C"/>
    <property type="match status" value="1"/>
</dbReference>
<dbReference type="Pfam" id="PF14841">
    <property type="entry name" value="FliG_M"/>
    <property type="match status" value="1"/>
</dbReference>
<dbReference type="Pfam" id="PF14842">
    <property type="entry name" value="FliG_N"/>
    <property type="match status" value="1"/>
</dbReference>
<dbReference type="PRINTS" id="PR00954">
    <property type="entry name" value="FLGMOTORFLIG"/>
</dbReference>
<dbReference type="SUPFAM" id="SSF48029">
    <property type="entry name" value="FliG"/>
    <property type="match status" value="2"/>
</dbReference>
<name>FLIG_BUCAP</name>